<keyword id="KW-1185">Reference proteome</keyword>
<keyword id="KW-0687">Ribonucleoprotein</keyword>
<keyword id="KW-0689">Ribosomal protein</keyword>
<proteinExistence type="inferred from homology"/>
<protein>
    <recommendedName>
        <fullName evidence="1">Large ribosomal subunit protein bL33A</fullName>
    </recommendedName>
    <alternativeName>
        <fullName evidence="1">50S ribosomal protein L33 1</fullName>
    </alternativeName>
</protein>
<accession>Q5M664</accession>
<name>RL331_STRT2</name>
<evidence type="ECO:0000255" key="1">
    <source>
        <dbReference type="HAMAP-Rule" id="MF_00294"/>
    </source>
</evidence>
<feature type="chain" id="PRO_0000356744" description="Large ribosomal subunit protein bL33A">
    <location>
        <begin position="1"/>
        <end position="50"/>
    </location>
</feature>
<dbReference type="EMBL" id="CP000023">
    <property type="protein sequence ID" value="AAV59938.1"/>
    <property type="molecule type" value="Genomic_DNA"/>
</dbReference>
<dbReference type="SMR" id="Q5M664"/>
<dbReference type="STRING" id="264199.stu0213"/>
<dbReference type="KEGG" id="stl:stu0213"/>
<dbReference type="eggNOG" id="COG0267">
    <property type="taxonomic scope" value="Bacteria"/>
</dbReference>
<dbReference type="HOGENOM" id="CLU_190949_0_1_9"/>
<dbReference type="Proteomes" id="UP000001170">
    <property type="component" value="Chromosome"/>
</dbReference>
<dbReference type="GO" id="GO:0005737">
    <property type="term" value="C:cytoplasm"/>
    <property type="evidence" value="ECO:0007669"/>
    <property type="project" value="UniProtKB-ARBA"/>
</dbReference>
<dbReference type="GO" id="GO:1990904">
    <property type="term" value="C:ribonucleoprotein complex"/>
    <property type="evidence" value="ECO:0007669"/>
    <property type="project" value="UniProtKB-KW"/>
</dbReference>
<dbReference type="GO" id="GO:0005840">
    <property type="term" value="C:ribosome"/>
    <property type="evidence" value="ECO:0007669"/>
    <property type="project" value="UniProtKB-KW"/>
</dbReference>
<dbReference type="GO" id="GO:0003735">
    <property type="term" value="F:structural constituent of ribosome"/>
    <property type="evidence" value="ECO:0007669"/>
    <property type="project" value="InterPro"/>
</dbReference>
<dbReference type="GO" id="GO:0006412">
    <property type="term" value="P:translation"/>
    <property type="evidence" value="ECO:0007669"/>
    <property type="project" value="UniProtKB-UniRule"/>
</dbReference>
<dbReference type="Gene3D" id="2.20.28.120">
    <property type="entry name" value="Ribosomal protein L33"/>
    <property type="match status" value="1"/>
</dbReference>
<dbReference type="HAMAP" id="MF_00294">
    <property type="entry name" value="Ribosomal_bL33"/>
    <property type="match status" value="1"/>
</dbReference>
<dbReference type="InterPro" id="IPR001705">
    <property type="entry name" value="Ribosomal_bL33"/>
</dbReference>
<dbReference type="InterPro" id="IPR038584">
    <property type="entry name" value="Ribosomal_bL33_sf"/>
</dbReference>
<dbReference type="InterPro" id="IPR011332">
    <property type="entry name" value="Ribosomal_zn-bd"/>
</dbReference>
<dbReference type="NCBIfam" id="NF001764">
    <property type="entry name" value="PRK00504.1"/>
    <property type="match status" value="1"/>
</dbReference>
<dbReference type="NCBIfam" id="TIGR01023">
    <property type="entry name" value="rpmG_bact"/>
    <property type="match status" value="1"/>
</dbReference>
<dbReference type="Pfam" id="PF00471">
    <property type="entry name" value="Ribosomal_L33"/>
    <property type="match status" value="1"/>
</dbReference>
<dbReference type="SUPFAM" id="SSF57829">
    <property type="entry name" value="Zn-binding ribosomal proteins"/>
    <property type="match status" value="1"/>
</dbReference>
<organism>
    <name type="scientific">Streptococcus thermophilus (strain ATCC BAA-250 / LMG 18311)</name>
    <dbReference type="NCBI Taxonomy" id="264199"/>
    <lineage>
        <taxon>Bacteria</taxon>
        <taxon>Bacillati</taxon>
        <taxon>Bacillota</taxon>
        <taxon>Bacilli</taxon>
        <taxon>Lactobacillales</taxon>
        <taxon>Streptococcaceae</taxon>
        <taxon>Streptococcus</taxon>
    </lineage>
</organism>
<gene>
    <name evidence="1" type="primary">rpmG1</name>
    <name type="synonym">rpmGC</name>
    <name type="ordered locus">stu0213</name>
</gene>
<reference key="1">
    <citation type="journal article" date="2004" name="Nat. Biotechnol.">
        <title>Complete sequence and comparative genome analysis of the dairy bacterium Streptococcus thermophilus.</title>
        <authorList>
            <person name="Bolotin A."/>
            <person name="Quinquis B."/>
            <person name="Renault P."/>
            <person name="Sorokin A."/>
            <person name="Ehrlich S.D."/>
            <person name="Kulakauskas S."/>
            <person name="Lapidus A."/>
            <person name="Goltsman E."/>
            <person name="Mazur M."/>
            <person name="Pusch G.D."/>
            <person name="Fonstein M."/>
            <person name="Overbeek R."/>
            <person name="Kyprides N."/>
            <person name="Purnelle B."/>
            <person name="Prozzi D."/>
            <person name="Ngui K."/>
            <person name="Masuy D."/>
            <person name="Hancy F."/>
            <person name="Burteau S."/>
            <person name="Boutry M."/>
            <person name="Delcour J."/>
            <person name="Goffeau A."/>
            <person name="Hols P."/>
        </authorList>
    </citation>
    <scope>NUCLEOTIDE SEQUENCE [LARGE SCALE GENOMIC DNA]</scope>
    <source>
        <strain>ATCC BAA-250 / LMG 18311</strain>
    </source>
</reference>
<comment type="similarity">
    <text evidence="1">Belongs to the bacterial ribosomal protein bL33 family.</text>
</comment>
<sequence>MAQKKASLACADCGNRNYSISVSSTPKPTRLEVNKFCKNCKKYTLHKETR</sequence>